<dbReference type="EC" id="2.10.1.1"/>
<dbReference type="EMBL" id="AF012285">
    <property type="protein sequence ID" value="AAC24902.1"/>
    <property type="molecule type" value="Genomic_DNA"/>
</dbReference>
<dbReference type="EMBL" id="AL009126">
    <property type="protein sequence ID" value="CAB13301.1"/>
    <property type="molecule type" value="Genomic_DNA"/>
</dbReference>
<dbReference type="PIR" id="E69659">
    <property type="entry name" value="E69659"/>
</dbReference>
<dbReference type="RefSeq" id="NP_389311.1">
    <property type="nucleotide sequence ID" value="NC_000964.3"/>
</dbReference>
<dbReference type="SMR" id="O31703"/>
<dbReference type="FunCoup" id="O31703">
    <property type="interactions" value="630"/>
</dbReference>
<dbReference type="STRING" id="224308.BSU14280"/>
<dbReference type="PaxDb" id="224308-BSU14280"/>
<dbReference type="EnsemblBacteria" id="CAB13301">
    <property type="protein sequence ID" value="CAB13301"/>
    <property type="gene ID" value="BSU_14280"/>
</dbReference>
<dbReference type="GeneID" id="938797"/>
<dbReference type="KEGG" id="bsu:BSU14280"/>
<dbReference type="PATRIC" id="fig|224308.179.peg.1558"/>
<dbReference type="eggNOG" id="COG0303">
    <property type="taxonomic scope" value="Bacteria"/>
</dbReference>
<dbReference type="InParanoid" id="O31703"/>
<dbReference type="OrthoDB" id="9804758at2"/>
<dbReference type="PhylomeDB" id="O31703"/>
<dbReference type="BioCyc" id="BSUB:BSU14280-MONOMER"/>
<dbReference type="UniPathway" id="UPA00344"/>
<dbReference type="Proteomes" id="UP000001570">
    <property type="component" value="Chromosome"/>
</dbReference>
<dbReference type="GO" id="GO:0005737">
    <property type="term" value="C:cytoplasm"/>
    <property type="evidence" value="ECO:0000318"/>
    <property type="project" value="GO_Central"/>
</dbReference>
<dbReference type="GO" id="GO:0005829">
    <property type="term" value="C:cytosol"/>
    <property type="evidence" value="ECO:0000318"/>
    <property type="project" value="GO_Central"/>
</dbReference>
<dbReference type="GO" id="GO:0046872">
    <property type="term" value="F:metal ion binding"/>
    <property type="evidence" value="ECO:0007669"/>
    <property type="project" value="UniProtKB-KW"/>
</dbReference>
<dbReference type="GO" id="GO:0061599">
    <property type="term" value="F:molybdopterin molybdotransferase activity"/>
    <property type="evidence" value="ECO:0000318"/>
    <property type="project" value="GO_Central"/>
</dbReference>
<dbReference type="GO" id="GO:0006777">
    <property type="term" value="P:Mo-molybdopterin cofactor biosynthetic process"/>
    <property type="evidence" value="ECO:0000318"/>
    <property type="project" value="GO_Central"/>
</dbReference>
<dbReference type="CDD" id="cd00887">
    <property type="entry name" value="MoeA"/>
    <property type="match status" value="1"/>
</dbReference>
<dbReference type="FunFam" id="2.170.190.11:FF:000001">
    <property type="entry name" value="Molybdopterin molybdenumtransferase"/>
    <property type="match status" value="1"/>
</dbReference>
<dbReference type="FunFam" id="2.40.340.10:FF:000002">
    <property type="entry name" value="Molybdopterin molybdenumtransferase"/>
    <property type="match status" value="1"/>
</dbReference>
<dbReference type="FunFam" id="3.40.980.10:FF:000004">
    <property type="entry name" value="Molybdopterin molybdenumtransferase"/>
    <property type="match status" value="1"/>
</dbReference>
<dbReference type="Gene3D" id="3.40.980.10">
    <property type="entry name" value="MoaB/Mog-like domain"/>
    <property type="match status" value="1"/>
</dbReference>
<dbReference type="Gene3D" id="2.40.340.10">
    <property type="entry name" value="MoeA, C-terminal, domain IV"/>
    <property type="match status" value="1"/>
</dbReference>
<dbReference type="Gene3D" id="3.90.105.10">
    <property type="entry name" value="Molybdopterin biosynthesis moea protein, domain 2"/>
    <property type="match status" value="1"/>
</dbReference>
<dbReference type="Gene3D" id="2.170.190.11">
    <property type="entry name" value="Molybdopterin biosynthesis moea protein, domain 3"/>
    <property type="match status" value="1"/>
</dbReference>
<dbReference type="InterPro" id="IPR036425">
    <property type="entry name" value="MoaB/Mog-like_dom_sf"/>
</dbReference>
<dbReference type="InterPro" id="IPR001453">
    <property type="entry name" value="MoaB/Mog_dom"/>
</dbReference>
<dbReference type="InterPro" id="IPR038987">
    <property type="entry name" value="MoeA-like"/>
</dbReference>
<dbReference type="InterPro" id="IPR005111">
    <property type="entry name" value="MoeA_C_domain_IV"/>
</dbReference>
<dbReference type="InterPro" id="IPR036688">
    <property type="entry name" value="MoeA_C_domain_IV_sf"/>
</dbReference>
<dbReference type="InterPro" id="IPR005110">
    <property type="entry name" value="MoeA_linker/N"/>
</dbReference>
<dbReference type="InterPro" id="IPR036135">
    <property type="entry name" value="MoeA_linker/N_sf"/>
</dbReference>
<dbReference type="NCBIfam" id="NF045515">
    <property type="entry name" value="Glp_gephyrin"/>
    <property type="match status" value="1"/>
</dbReference>
<dbReference type="NCBIfam" id="TIGR00177">
    <property type="entry name" value="molyb_syn"/>
    <property type="match status" value="1"/>
</dbReference>
<dbReference type="PANTHER" id="PTHR10192:SF5">
    <property type="entry name" value="GEPHYRIN"/>
    <property type="match status" value="1"/>
</dbReference>
<dbReference type="PANTHER" id="PTHR10192">
    <property type="entry name" value="MOLYBDOPTERIN BIOSYNTHESIS PROTEIN"/>
    <property type="match status" value="1"/>
</dbReference>
<dbReference type="Pfam" id="PF00994">
    <property type="entry name" value="MoCF_biosynth"/>
    <property type="match status" value="1"/>
</dbReference>
<dbReference type="Pfam" id="PF03454">
    <property type="entry name" value="MoeA_C"/>
    <property type="match status" value="1"/>
</dbReference>
<dbReference type="Pfam" id="PF03453">
    <property type="entry name" value="MoeA_N"/>
    <property type="match status" value="1"/>
</dbReference>
<dbReference type="SMART" id="SM00852">
    <property type="entry name" value="MoCF_biosynth"/>
    <property type="match status" value="1"/>
</dbReference>
<dbReference type="SUPFAM" id="SSF63867">
    <property type="entry name" value="MoeA C-terminal domain-like"/>
    <property type="match status" value="1"/>
</dbReference>
<dbReference type="SUPFAM" id="SSF63882">
    <property type="entry name" value="MoeA N-terminal region -like"/>
    <property type="match status" value="1"/>
</dbReference>
<dbReference type="SUPFAM" id="SSF53218">
    <property type="entry name" value="Molybdenum cofactor biosynthesis proteins"/>
    <property type="match status" value="1"/>
</dbReference>
<feature type="chain" id="PRO_0000392069" description="Molybdopterin molybdenumtransferase">
    <location>
        <begin position="1"/>
        <end position="430"/>
    </location>
</feature>
<gene>
    <name type="primary">moeA</name>
    <name type="ordered locus">BSU14280</name>
</gene>
<name>MOEA_BACSU</name>
<evidence type="ECO:0000250" key="1"/>
<evidence type="ECO:0000305" key="2"/>
<sequence length="430" mass="46619">MLEKRTPIPVDEAVRRVCHFQKQGETEWVALEDSLHRFLAEDITADHHVPAFDRSPYDGFAVRACDTAEASRENPVRFEVIDHIGAGAVSEKELGPFQAVRIMTGAQIPEGADAVVMIELTQAFEENGKSFMSLKRRFQTGDNISKTGEDAQKGSVLLTKGTRVTPGVTALLATFGYASVPVVRKPVVGIIATGTELLNVSDPLEPGKIRNSNASMVYAQAIEAGATPLYLGKISDELDKSFAAVKEAMKKVDFLITTGGVSVGDFDFLPAIYEKLGADVLFNKVAMRPGSVTTVAHANDMLLFGLSGNPSACYVGFELFVKPIIQTWLLNETPHSICAEAVLTKDFPKPNPFTRFVRALVHHQEGKLLATPVGLDKSSSVTSLADANAFIILPGGTRGYESGRTVQVLLIREENGSEWPWSVLSRSSKL</sequence>
<reference key="1">
    <citation type="submission" date="1997-07" db="EMBL/GenBank/DDBJ databases">
        <title>Sequence analysis of the mobA-ampS region of the Bacillus subtilis chromosome.</title>
        <authorList>
            <person name="Caldwell R.M."/>
            <person name="Ferrari E."/>
        </authorList>
    </citation>
    <scope>NUCLEOTIDE SEQUENCE [GENOMIC DNA]</scope>
    <source>
        <strain>168</strain>
    </source>
</reference>
<reference key="2">
    <citation type="journal article" date="1997" name="Nature">
        <title>The complete genome sequence of the Gram-positive bacterium Bacillus subtilis.</title>
        <authorList>
            <person name="Kunst F."/>
            <person name="Ogasawara N."/>
            <person name="Moszer I."/>
            <person name="Albertini A.M."/>
            <person name="Alloni G."/>
            <person name="Azevedo V."/>
            <person name="Bertero M.G."/>
            <person name="Bessieres P."/>
            <person name="Bolotin A."/>
            <person name="Borchert S."/>
            <person name="Borriss R."/>
            <person name="Boursier L."/>
            <person name="Brans A."/>
            <person name="Braun M."/>
            <person name="Brignell S.C."/>
            <person name="Bron S."/>
            <person name="Brouillet S."/>
            <person name="Bruschi C.V."/>
            <person name="Caldwell B."/>
            <person name="Capuano V."/>
            <person name="Carter N.M."/>
            <person name="Choi S.-K."/>
            <person name="Codani J.-J."/>
            <person name="Connerton I.F."/>
            <person name="Cummings N.J."/>
            <person name="Daniel R.A."/>
            <person name="Denizot F."/>
            <person name="Devine K.M."/>
            <person name="Duesterhoeft A."/>
            <person name="Ehrlich S.D."/>
            <person name="Emmerson P.T."/>
            <person name="Entian K.-D."/>
            <person name="Errington J."/>
            <person name="Fabret C."/>
            <person name="Ferrari E."/>
            <person name="Foulger D."/>
            <person name="Fritz C."/>
            <person name="Fujita M."/>
            <person name="Fujita Y."/>
            <person name="Fuma S."/>
            <person name="Galizzi A."/>
            <person name="Galleron N."/>
            <person name="Ghim S.-Y."/>
            <person name="Glaser P."/>
            <person name="Goffeau A."/>
            <person name="Golightly E.J."/>
            <person name="Grandi G."/>
            <person name="Guiseppi G."/>
            <person name="Guy B.J."/>
            <person name="Haga K."/>
            <person name="Haiech J."/>
            <person name="Harwood C.R."/>
            <person name="Henaut A."/>
            <person name="Hilbert H."/>
            <person name="Holsappel S."/>
            <person name="Hosono S."/>
            <person name="Hullo M.-F."/>
            <person name="Itaya M."/>
            <person name="Jones L.-M."/>
            <person name="Joris B."/>
            <person name="Karamata D."/>
            <person name="Kasahara Y."/>
            <person name="Klaerr-Blanchard M."/>
            <person name="Klein C."/>
            <person name="Kobayashi Y."/>
            <person name="Koetter P."/>
            <person name="Koningstein G."/>
            <person name="Krogh S."/>
            <person name="Kumano M."/>
            <person name="Kurita K."/>
            <person name="Lapidus A."/>
            <person name="Lardinois S."/>
            <person name="Lauber J."/>
            <person name="Lazarevic V."/>
            <person name="Lee S.-M."/>
            <person name="Levine A."/>
            <person name="Liu H."/>
            <person name="Masuda S."/>
            <person name="Mauel C."/>
            <person name="Medigue C."/>
            <person name="Medina N."/>
            <person name="Mellado R.P."/>
            <person name="Mizuno M."/>
            <person name="Moestl D."/>
            <person name="Nakai S."/>
            <person name="Noback M."/>
            <person name="Noone D."/>
            <person name="O'Reilly M."/>
            <person name="Ogawa K."/>
            <person name="Ogiwara A."/>
            <person name="Oudega B."/>
            <person name="Park S.-H."/>
            <person name="Parro V."/>
            <person name="Pohl T.M."/>
            <person name="Portetelle D."/>
            <person name="Porwollik S."/>
            <person name="Prescott A.M."/>
            <person name="Presecan E."/>
            <person name="Pujic P."/>
            <person name="Purnelle B."/>
            <person name="Rapoport G."/>
            <person name="Rey M."/>
            <person name="Reynolds S."/>
            <person name="Rieger M."/>
            <person name="Rivolta C."/>
            <person name="Rocha E."/>
            <person name="Roche B."/>
            <person name="Rose M."/>
            <person name="Sadaie Y."/>
            <person name="Sato T."/>
            <person name="Scanlan E."/>
            <person name="Schleich S."/>
            <person name="Schroeter R."/>
            <person name="Scoffone F."/>
            <person name="Sekiguchi J."/>
            <person name="Sekowska A."/>
            <person name="Seror S.J."/>
            <person name="Serror P."/>
            <person name="Shin B.-S."/>
            <person name="Soldo B."/>
            <person name="Sorokin A."/>
            <person name="Tacconi E."/>
            <person name="Takagi T."/>
            <person name="Takahashi H."/>
            <person name="Takemaru K."/>
            <person name="Takeuchi M."/>
            <person name="Tamakoshi A."/>
            <person name="Tanaka T."/>
            <person name="Terpstra P."/>
            <person name="Tognoni A."/>
            <person name="Tosato V."/>
            <person name="Uchiyama S."/>
            <person name="Vandenbol M."/>
            <person name="Vannier F."/>
            <person name="Vassarotti A."/>
            <person name="Viari A."/>
            <person name="Wambutt R."/>
            <person name="Wedler E."/>
            <person name="Wedler H."/>
            <person name="Weitzenegger T."/>
            <person name="Winters P."/>
            <person name="Wipat A."/>
            <person name="Yamamoto H."/>
            <person name="Yamane K."/>
            <person name="Yasumoto K."/>
            <person name="Yata K."/>
            <person name="Yoshida K."/>
            <person name="Yoshikawa H.-F."/>
            <person name="Zumstein E."/>
            <person name="Yoshikawa H."/>
            <person name="Danchin A."/>
        </authorList>
    </citation>
    <scope>NUCLEOTIDE SEQUENCE [LARGE SCALE GENOMIC DNA]</scope>
    <source>
        <strain>168</strain>
    </source>
</reference>
<accession>O31703</accession>
<accession>Q7BVS3</accession>
<keyword id="KW-0460">Magnesium</keyword>
<keyword id="KW-0479">Metal-binding</keyword>
<keyword id="KW-0500">Molybdenum</keyword>
<keyword id="KW-0501">Molybdenum cofactor biosynthesis</keyword>
<keyword id="KW-1185">Reference proteome</keyword>
<keyword id="KW-0808">Transferase</keyword>
<comment type="function">
    <text evidence="1">Catalyzes the insertion of molybdate into adenylated molybdopterin with the concomitant release of AMP.</text>
</comment>
<comment type="catalytic activity">
    <reaction>
        <text>adenylyl-molybdopterin + molybdate = Mo-molybdopterin + AMP + H(+)</text>
        <dbReference type="Rhea" id="RHEA:35047"/>
        <dbReference type="ChEBI" id="CHEBI:15378"/>
        <dbReference type="ChEBI" id="CHEBI:36264"/>
        <dbReference type="ChEBI" id="CHEBI:62727"/>
        <dbReference type="ChEBI" id="CHEBI:71302"/>
        <dbReference type="ChEBI" id="CHEBI:456215"/>
        <dbReference type="EC" id="2.10.1.1"/>
    </reaction>
</comment>
<comment type="cofactor">
    <cofactor evidence="1">
        <name>Mg(2+)</name>
        <dbReference type="ChEBI" id="CHEBI:18420"/>
    </cofactor>
    <text evidence="1">Binds 1 Mg(2+) ion per subunit.</text>
</comment>
<comment type="pathway">
    <text>Cofactor biosynthesis; molybdopterin biosynthesis.</text>
</comment>
<comment type="similarity">
    <text evidence="2">Belongs to the MoeA family.</text>
</comment>
<organism>
    <name type="scientific">Bacillus subtilis (strain 168)</name>
    <dbReference type="NCBI Taxonomy" id="224308"/>
    <lineage>
        <taxon>Bacteria</taxon>
        <taxon>Bacillati</taxon>
        <taxon>Bacillota</taxon>
        <taxon>Bacilli</taxon>
        <taxon>Bacillales</taxon>
        <taxon>Bacillaceae</taxon>
        <taxon>Bacillus</taxon>
    </lineage>
</organism>
<protein>
    <recommendedName>
        <fullName>Molybdopterin molybdenumtransferase</fullName>
        <shortName>MPT Mo-transferase</shortName>
        <ecNumber>2.10.1.1</ecNumber>
    </recommendedName>
</protein>
<proteinExistence type="inferred from homology"/>